<organism>
    <name type="scientific">Methanococcus maripaludis (strain DSM 14266 / JCM 13030 / NBRC 101832 / S2 / LL)</name>
    <dbReference type="NCBI Taxonomy" id="267377"/>
    <lineage>
        <taxon>Archaea</taxon>
        <taxon>Methanobacteriati</taxon>
        <taxon>Methanobacteriota</taxon>
        <taxon>Methanomada group</taxon>
        <taxon>Methanococci</taxon>
        <taxon>Methanococcales</taxon>
        <taxon>Methanococcaceae</taxon>
        <taxon>Methanococcus</taxon>
    </lineage>
</organism>
<reference key="1">
    <citation type="journal article" date="2004" name="J. Bacteriol.">
        <title>Complete genome sequence of the genetically tractable hydrogenotrophic methanogen Methanococcus maripaludis.</title>
        <authorList>
            <person name="Hendrickson E.L."/>
            <person name="Kaul R."/>
            <person name="Zhou Y."/>
            <person name="Bovee D."/>
            <person name="Chapman P."/>
            <person name="Chung J."/>
            <person name="Conway de Macario E."/>
            <person name="Dodsworth J.A."/>
            <person name="Gillett W."/>
            <person name="Graham D.E."/>
            <person name="Hackett M."/>
            <person name="Haydock A.K."/>
            <person name="Kang A."/>
            <person name="Land M.L."/>
            <person name="Levy R."/>
            <person name="Lie T.J."/>
            <person name="Major T.A."/>
            <person name="Moore B.C."/>
            <person name="Porat I."/>
            <person name="Palmeiri A."/>
            <person name="Rouse G."/>
            <person name="Saenphimmachak C."/>
            <person name="Soell D."/>
            <person name="Van Dien S."/>
            <person name="Wang T."/>
            <person name="Whitman W.B."/>
            <person name="Xia Q."/>
            <person name="Zhang Y."/>
            <person name="Larimer F.W."/>
            <person name="Olson M.V."/>
            <person name="Leigh J.A."/>
        </authorList>
    </citation>
    <scope>NUCLEOTIDE SEQUENCE [LARGE SCALE GENOMIC DNA]</scope>
    <source>
        <strain>DSM 14266 / JCM 13030 / NBRC 101832 / S2 / LL</strain>
    </source>
</reference>
<comment type="function">
    <text evidence="1">Part of a complex that catalyzes the formation of methyl-coenzyme M and tetrahydromethanopterin from coenzyme M and methyl-tetrahydromethanopterin. This is an energy-conserving, sodium-ion translocating step.</text>
</comment>
<comment type="catalytic activity">
    <reaction evidence="1">
        <text>5-methyl-5,6,7,8-tetrahydromethanopterin + coenzyme M + 2 Na(+)(in) = 5,6,7,8-tetrahydromethanopterin + methyl-coenzyme M + 2 Na(+)(out)</text>
        <dbReference type="Rhea" id="RHEA:53492"/>
        <dbReference type="ChEBI" id="CHEBI:29101"/>
        <dbReference type="ChEBI" id="CHEBI:58103"/>
        <dbReference type="ChEBI" id="CHEBI:58116"/>
        <dbReference type="ChEBI" id="CHEBI:58286"/>
        <dbReference type="ChEBI" id="CHEBI:58319"/>
        <dbReference type="EC" id="7.2.1.4"/>
    </reaction>
</comment>
<comment type="pathway">
    <text evidence="1">One-carbon metabolism; methanogenesis from CO(2); methyl-coenzyme M from 5,10-methylene-5,6,7,8-tetrahydromethanopterin: step 2/2.</text>
</comment>
<comment type="subunit">
    <text evidence="1">The complex is composed of 8 subunits; MtrA, MtrB, MtrC, MtrD, MtrE, MtrF, MtrG and MtrH.</text>
</comment>
<comment type="subcellular location">
    <subcellularLocation>
        <location evidence="1">Cell membrane</location>
        <topology evidence="1">Multi-pass membrane protein</topology>
    </subcellularLocation>
</comment>
<comment type="similarity">
    <text evidence="1">Belongs to the MtrC family.</text>
</comment>
<proteinExistence type="inferred from homology"/>
<feature type="chain" id="PRO_0000147525" description="Tetrahydromethanopterin S-methyltransferase subunit C">
    <location>
        <begin position="1"/>
        <end position="262"/>
    </location>
</feature>
<feature type="transmembrane region" description="Helical" evidence="1">
    <location>
        <begin position="35"/>
        <end position="57"/>
    </location>
</feature>
<feature type="transmembrane region" description="Helical" evidence="1">
    <location>
        <begin position="70"/>
        <end position="92"/>
    </location>
</feature>
<feature type="transmembrane region" description="Helical" evidence="1">
    <location>
        <begin position="97"/>
        <end position="119"/>
    </location>
</feature>
<feature type="transmembrane region" description="Helical" evidence="1">
    <location>
        <begin position="140"/>
        <end position="162"/>
    </location>
</feature>
<feature type="transmembrane region" description="Helical" evidence="1">
    <location>
        <begin position="172"/>
        <end position="194"/>
    </location>
</feature>
<feature type="transmembrane region" description="Helical" evidence="1">
    <location>
        <begin position="214"/>
        <end position="236"/>
    </location>
</feature>
<protein>
    <recommendedName>
        <fullName evidence="1">Tetrahydromethanopterin S-methyltransferase subunit C</fullName>
        <ecNumber evidence="1">7.2.1.4</ecNumber>
    </recommendedName>
    <alternativeName>
        <fullName evidence="1">N5-methyltetrahydromethanopterin--coenzyme M methyltransferase subunit C</fullName>
    </alternativeName>
</protein>
<evidence type="ECO:0000255" key="1">
    <source>
        <dbReference type="HAMAP-Rule" id="MF_01096"/>
    </source>
</evidence>
<name>MTRC_METMP</name>
<accession>Q6LWZ2</accession>
<sequence>MSHGGGGHAAELFPEDQVLAIGAVLSIIGMYVAQFVPSLAMLIGGLLAAGACVAGANTTRRVAAYGLGTGVPSIGMVSLGMGTISALAGVLIPSAFGLPVLATPILAAVIAVVVGFIVGKLTQNPVGMKVPIIVSSMTKLSLMGALAILGFCTAFAGGFSADLIINGAINNGVIALAFIAAGMSILHPFNACIGPDESHKRTITLAVACGLMAWLIFSIAKLDIVSIVVAAIFWLYTYGSFVKMSLGDACEVKYVPELPKKE</sequence>
<dbReference type="EC" id="7.2.1.4" evidence="1"/>
<dbReference type="EMBL" id="BX950229">
    <property type="protein sequence ID" value="CAF31118.1"/>
    <property type="molecule type" value="Genomic_DNA"/>
</dbReference>
<dbReference type="RefSeq" id="WP_011171506.1">
    <property type="nucleotide sequence ID" value="NC_005791.1"/>
</dbReference>
<dbReference type="SMR" id="Q6LWZ2"/>
<dbReference type="STRING" id="267377.MMP1562"/>
<dbReference type="EnsemblBacteria" id="CAF31118">
    <property type="protein sequence ID" value="CAF31118"/>
    <property type="gene ID" value="MMP1562"/>
</dbReference>
<dbReference type="GeneID" id="10983142"/>
<dbReference type="GeneID" id="37876166"/>
<dbReference type="KEGG" id="mmp:MMP1562"/>
<dbReference type="PATRIC" id="fig|267377.15.peg.1600"/>
<dbReference type="eggNOG" id="arCOG04868">
    <property type="taxonomic scope" value="Archaea"/>
</dbReference>
<dbReference type="HOGENOM" id="CLU_092286_0_0_2"/>
<dbReference type="OrthoDB" id="60591at2157"/>
<dbReference type="UniPathway" id="UPA00640">
    <property type="reaction ID" value="UER00698"/>
</dbReference>
<dbReference type="Proteomes" id="UP000000590">
    <property type="component" value="Chromosome"/>
</dbReference>
<dbReference type="GO" id="GO:0005886">
    <property type="term" value="C:plasma membrane"/>
    <property type="evidence" value="ECO:0007669"/>
    <property type="project" value="UniProtKB-SubCell"/>
</dbReference>
<dbReference type="GO" id="GO:0030269">
    <property type="term" value="F:tetrahydromethanopterin S-methyltransferase activity"/>
    <property type="evidence" value="ECO:0007669"/>
    <property type="project" value="UniProtKB-UniRule"/>
</dbReference>
<dbReference type="GO" id="GO:0019386">
    <property type="term" value="P:methanogenesis, from carbon dioxide"/>
    <property type="evidence" value="ECO:0007669"/>
    <property type="project" value="UniProtKB-UniRule"/>
</dbReference>
<dbReference type="GO" id="GO:0032259">
    <property type="term" value="P:methylation"/>
    <property type="evidence" value="ECO:0007669"/>
    <property type="project" value="UniProtKB-KW"/>
</dbReference>
<dbReference type="GO" id="GO:0006730">
    <property type="term" value="P:one-carbon metabolic process"/>
    <property type="evidence" value="ECO:0007669"/>
    <property type="project" value="UniProtKB-UniRule"/>
</dbReference>
<dbReference type="HAMAP" id="MF_01096">
    <property type="entry name" value="MtrC"/>
    <property type="match status" value="1"/>
</dbReference>
<dbReference type="InterPro" id="IPR005865">
    <property type="entry name" value="THM_MeTrfase_su_C"/>
</dbReference>
<dbReference type="NCBIfam" id="TIGR01148">
    <property type="entry name" value="mtrC"/>
    <property type="match status" value="1"/>
</dbReference>
<dbReference type="Pfam" id="PF04211">
    <property type="entry name" value="MtrC"/>
    <property type="match status" value="1"/>
</dbReference>
<dbReference type="PIRSF" id="PIRSF006530">
    <property type="entry name" value="MtrC"/>
    <property type="match status" value="1"/>
</dbReference>
<keyword id="KW-1003">Cell membrane</keyword>
<keyword id="KW-0472">Membrane</keyword>
<keyword id="KW-0484">Methanogenesis</keyword>
<keyword id="KW-0489">Methyltransferase</keyword>
<keyword id="KW-0554">One-carbon metabolism</keyword>
<keyword id="KW-1185">Reference proteome</keyword>
<keyword id="KW-0808">Transferase</keyword>
<keyword id="KW-1278">Translocase</keyword>
<keyword id="KW-0812">Transmembrane</keyword>
<keyword id="KW-1133">Transmembrane helix</keyword>
<gene>
    <name evidence="1" type="primary">mtrC</name>
    <name type="ordered locus">MMP1562</name>
</gene>